<reference key="1">
    <citation type="journal article" date="1996" name="Microbiology">
        <title>Translational control of puf operon expression in Rhodobacter sphaeroides 2.4.1.</title>
        <authorList>
            <person name="Gong L."/>
            <person name="Kaplan S."/>
        </authorList>
    </citation>
    <scope>NUCLEOTIDE SEQUENCE [GENOMIC DNA]</scope>
</reference>
<reference key="2">
    <citation type="submission" date="1999-03" db="EMBL/GenBank/DDBJ databases">
        <title>R.sphaeroides genes bchC, bchX, bchY, bchZ and pufQ.</title>
        <authorList>
            <person name="McGlynn P."/>
        </authorList>
    </citation>
    <scope>NUCLEOTIDE SEQUENCE [GENOMIC DNA]</scope>
</reference>
<reference key="3">
    <citation type="journal article" date="2000" name="Nucleic Acids Res.">
        <title>DNA sequence analysis of the photosynthesis region of Rhodobacter sphaeroides 2.4.1.</title>
        <authorList>
            <person name="Choudhary M."/>
            <person name="Kaplan S."/>
        </authorList>
    </citation>
    <scope>NUCLEOTIDE SEQUENCE [GENOMIC DNA]</scope>
</reference>
<reference key="4">
    <citation type="submission" date="2005-09" db="EMBL/GenBank/DDBJ databases">
        <title>Complete sequence of chromosome 1 of Rhodobacter sphaeroides 2.4.1.</title>
        <authorList>
            <person name="Copeland A."/>
            <person name="Lucas S."/>
            <person name="Lapidus A."/>
            <person name="Barry K."/>
            <person name="Detter J.C."/>
            <person name="Glavina T."/>
            <person name="Hammon N."/>
            <person name="Israni S."/>
            <person name="Pitluck S."/>
            <person name="Richardson P."/>
            <person name="Mackenzie C."/>
            <person name="Choudhary M."/>
            <person name="Larimer F."/>
            <person name="Hauser L.J."/>
            <person name="Land M."/>
            <person name="Donohue T.J."/>
            <person name="Kaplan S."/>
        </authorList>
    </citation>
    <scope>NUCLEOTIDE SEQUENCE [LARGE SCALE GENOMIC DNA]</scope>
    <source>
        <strain>ATCC 17023 / DSM 158 / JCM 6121 / CCUG 31486 / LMG 2827 / NBRC 12203 / NCIMB 8253 / ATH 2.4.1.</strain>
    </source>
</reference>
<dbReference type="EMBL" id="S82643">
    <property type="protein sequence ID" value="AAB46798.1"/>
    <property type="molecule type" value="Genomic_DNA"/>
</dbReference>
<dbReference type="EMBL" id="AJ010302">
    <property type="protein sequence ID" value="CAB38751.1"/>
    <property type="molecule type" value="Genomic_DNA"/>
</dbReference>
<dbReference type="EMBL" id="AF195122">
    <property type="protein sequence ID" value="AAF24301.1"/>
    <property type="molecule type" value="Genomic_DNA"/>
</dbReference>
<dbReference type="EMBL" id="CP000143">
    <property type="protein sequence ID" value="ABA79432.1"/>
    <property type="molecule type" value="Genomic_DNA"/>
</dbReference>
<dbReference type="PIR" id="T50757">
    <property type="entry name" value="T50757"/>
</dbReference>
<dbReference type="RefSeq" id="YP_353333.1">
    <property type="nucleotide sequence ID" value="NC_007493.2"/>
</dbReference>
<dbReference type="STRING" id="272943.RSP_6109"/>
<dbReference type="EnsemblBacteria" id="ABA79432">
    <property type="protein sequence ID" value="ABA79432"/>
    <property type="gene ID" value="RSP_6109"/>
</dbReference>
<dbReference type="KEGG" id="rsp:RSP_6109"/>
<dbReference type="Proteomes" id="UP000002703">
    <property type="component" value="Chromosome 1"/>
</dbReference>
<gene>
    <name type="primary">pufK</name>
    <name type="ordered locus">RHOS4_18640</name>
    <name type="ORF">RSP_6109</name>
</gene>
<keyword id="KW-1185">Reference proteome</keyword>
<keyword id="KW-0804">Transcription</keyword>
<keyword id="KW-0805">Transcription regulation</keyword>
<proteinExistence type="predicted"/>
<protein>
    <recommendedName>
        <fullName>Transcriptional regulatory protein PufK</fullName>
    </recommendedName>
</protein>
<comment type="function">
    <text>Involved in the transcriptional regulation of pufB.</text>
</comment>
<feature type="chain" id="PRO_0000097099" description="Transcriptional regulatory protein PufK">
    <location>
        <begin position="1"/>
        <end position="20"/>
    </location>
</feature>
<feature type="region of interest" description="Disordered" evidence="1">
    <location>
        <begin position="1"/>
        <end position="20"/>
    </location>
</feature>
<feature type="compositionally biased region" description="Basic residues" evidence="1">
    <location>
        <begin position="1"/>
        <end position="11"/>
    </location>
</feature>
<name>PUFK_CERS4</name>
<evidence type="ECO:0000256" key="1">
    <source>
        <dbReference type="SAM" id="MobiDB-lite"/>
    </source>
</evidence>
<organism>
    <name type="scientific">Cereibacter sphaeroides (strain ATCC 17023 / DSM 158 / JCM 6121 / CCUG 31486 / LMG 2827 / NBRC 12203 / NCIMB 8253 / ATH 2.4.1.)</name>
    <name type="common">Rhodobacter sphaeroides</name>
    <dbReference type="NCBI Taxonomy" id="272943"/>
    <lineage>
        <taxon>Bacteria</taxon>
        <taxon>Pseudomonadati</taxon>
        <taxon>Pseudomonadota</taxon>
        <taxon>Alphaproteobacteria</taxon>
        <taxon>Rhodobacterales</taxon>
        <taxon>Paracoccaceae</taxon>
        <taxon>Cereibacter</taxon>
    </lineage>
</organism>
<accession>Q53121</accession>
<accession>O08033</accession>
<accession>Q3J1A2</accession>
<sequence>MVPYRNPRHQHVASVLRSGG</sequence>